<protein>
    <recommendedName>
        <fullName>Pre-rRNA-processing protein IPI1</fullName>
    </recommendedName>
</protein>
<keyword id="KW-0539">Nucleus</keyword>
<keyword id="KW-1185">Reference proteome</keyword>
<keyword id="KW-0690">Ribosome biogenesis</keyword>
<keyword id="KW-0698">rRNA processing</keyword>
<gene>
    <name type="primary">IPI1</name>
    <name type="ORF">MGCH7_ch7g508</name>
    <name type="ORF">MGG_02761</name>
</gene>
<accession>A4RBW8</accession>
<accession>G4NJ32</accession>
<accession>Q2KG27</accession>
<dbReference type="EMBL" id="CM000230">
    <property type="protein sequence ID" value="EAQ71101.1"/>
    <property type="molecule type" value="Genomic_DNA"/>
</dbReference>
<dbReference type="EMBL" id="CM001237">
    <property type="protein sequence ID" value="EHA46248.1"/>
    <property type="molecule type" value="Genomic_DNA"/>
</dbReference>
<dbReference type="RefSeq" id="XP_003720991.1">
    <property type="nucleotide sequence ID" value="XM_003720943.1"/>
</dbReference>
<dbReference type="SMR" id="A4RBW8"/>
<dbReference type="FunCoup" id="A4RBW8">
    <property type="interactions" value="217"/>
</dbReference>
<dbReference type="STRING" id="242507.A4RBW8"/>
<dbReference type="EnsemblFungi" id="MGG_02761T0">
    <property type="protein sequence ID" value="MGG_02761T0"/>
    <property type="gene ID" value="MGG_02761"/>
</dbReference>
<dbReference type="GeneID" id="2682766"/>
<dbReference type="KEGG" id="mgr:MGG_02761"/>
<dbReference type="VEuPathDB" id="FungiDB:MGG_02761"/>
<dbReference type="eggNOG" id="KOG2149">
    <property type="taxonomic scope" value="Eukaryota"/>
</dbReference>
<dbReference type="HOGENOM" id="CLU_050252_2_0_1"/>
<dbReference type="InParanoid" id="A4RBW8"/>
<dbReference type="OMA" id="CAGGWVK"/>
<dbReference type="OrthoDB" id="361362at2759"/>
<dbReference type="Proteomes" id="UP000009058">
    <property type="component" value="Chromosome 7"/>
</dbReference>
<dbReference type="GO" id="GO:0005634">
    <property type="term" value="C:nucleus"/>
    <property type="evidence" value="ECO:0007669"/>
    <property type="project" value="UniProtKB-SubCell"/>
</dbReference>
<dbReference type="GO" id="GO:0120330">
    <property type="term" value="C:rixosome complex"/>
    <property type="evidence" value="ECO:0007669"/>
    <property type="project" value="TreeGrafter"/>
</dbReference>
<dbReference type="GO" id="GO:0006364">
    <property type="term" value="P:rRNA processing"/>
    <property type="evidence" value="ECO:0007669"/>
    <property type="project" value="UniProtKB-KW"/>
</dbReference>
<dbReference type="Gene3D" id="1.25.10.10">
    <property type="entry name" value="Leucine-rich Repeat Variant"/>
    <property type="match status" value="1"/>
</dbReference>
<dbReference type="InterPro" id="IPR011989">
    <property type="entry name" value="ARM-like"/>
</dbReference>
<dbReference type="InterPro" id="IPR016024">
    <property type="entry name" value="ARM-type_fold"/>
</dbReference>
<dbReference type="InterPro" id="IPR024679">
    <property type="entry name" value="Ipi1_N"/>
</dbReference>
<dbReference type="PANTHER" id="PTHR16056">
    <property type="entry name" value="REGULATOR OF MICROTUBULE DYNAMICS PROTEIN"/>
    <property type="match status" value="1"/>
</dbReference>
<dbReference type="PANTHER" id="PTHR16056:SF2">
    <property type="entry name" value="TESTIS-EXPRESSED PROTEIN 10"/>
    <property type="match status" value="1"/>
</dbReference>
<dbReference type="Pfam" id="PF12333">
    <property type="entry name" value="Ipi1_N"/>
    <property type="match status" value="1"/>
</dbReference>
<dbReference type="SUPFAM" id="SSF48371">
    <property type="entry name" value="ARM repeat"/>
    <property type="match status" value="1"/>
</dbReference>
<comment type="function">
    <text evidence="1">Component of the RIX1 complex required for processing of ITS2 sequences from 35S pre-rRNA.</text>
</comment>
<comment type="subunit">
    <text evidence="1">Component of the RIX1 complex, composed of IPI1, RIX1/IPI2 and IPI3 in a 1:2:2 stoichiometry. The complex interacts (via RIX1) with MDN1 (via its hexameric AAA ATPase ring) and the pre-60S ribosome particles.</text>
</comment>
<comment type="subcellular location">
    <subcellularLocation>
        <location evidence="1">Nucleus</location>
    </subcellularLocation>
</comment>
<comment type="similarity">
    <text evidence="3">Belongs to the IPI1/TEX10 family.</text>
</comment>
<sequence length="345" mass="37533">MGSSVRKKKEKKKDFQKTKLKVGKAKEKPASFTDTSFKSRAIVVAQSSLTVEGPNPVEQFKHYLSLASTSRSENQRRDALAFLTTQLSHQPPNNPVGTPAILAKLLPLISDSNSGVRTQLYKLLQAFPSADIQPQVERISMYVRAGMTHLSADIRDDTLSIMEWLLEVAGSEVVSCAGGWMKTLNVFAAMLGWSSIVAANAAAAAGSAPRNKGWTSAPKSTFGAAKGGASYARQLLALAKFLEIGFRPEATGSGGQRTLWNSLYRLPRTSNPFGYLNLFGAPRDEDSEIYADREDRQRVFSRKWHAVITKGLEEAKKEGGAVGRAGAVLNQTLKDGLADYDDHVL</sequence>
<evidence type="ECO:0000250" key="1">
    <source>
        <dbReference type="UniProtKB" id="P38803"/>
    </source>
</evidence>
<evidence type="ECO:0000256" key="2">
    <source>
        <dbReference type="SAM" id="MobiDB-lite"/>
    </source>
</evidence>
<evidence type="ECO:0000305" key="3"/>
<feature type="chain" id="PRO_0000308723" description="Pre-rRNA-processing protein IPI1">
    <location>
        <begin position="1"/>
        <end position="345"/>
    </location>
</feature>
<feature type="region of interest" description="Disordered" evidence="2">
    <location>
        <begin position="1"/>
        <end position="29"/>
    </location>
</feature>
<feature type="compositionally biased region" description="Basic residues" evidence="2">
    <location>
        <begin position="1"/>
        <end position="11"/>
    </location>
</feature>
<proteinExistence type="inferred from homology"/>
<reference key="1">
    <citation type="submission" date="2005-01" db="EMBL/GenBank/DDBJ databases">
        <title>The sequence of Magnaporthe grisea chromosome 7.</title>
        <authorList>
            <person name="Thon M.R."/>
            <person name="Pan H."/>
            <person name="Diener A."/>
            <person name="Papalas J."/>
            <person name="Taro A."/>
            <person name="Mitchell T.K."/>
            <person name="Dean R.A."/>
        </authorList>
    </citation>
    <scope>NUCLEOTIDE SEQUENCE [LARGE SCALE GENOMIC DNA]</scope>
    <source>
        <strain>70-15 / ATCC MYA-4617 / FGSC 8958</strain>
    </source>
</reference>
<reference key="2">
    <citation type="journal article" date="2005" name="Nature">
        <title>The genome sequence of the rice blast fungus Magnaporthe grisea.</title>
        <authorList>
            <person name="Dean R.A."/>
            <person name="Talbot N.J."/>
            <person name="Ebbole D.J."/>
            <person name="Farman M.L."/>
            <person name="Mitchell T.K."/>
            <person name="Orbach M.J."/>
            <person name="Thon M.R."/>
            <person name="Kulkarni R."/>
            <person name="Xu J.-R."/>
            <person name="Pan H."/>
            <person name="Read N.D."/>
            <person name="Lee Y.-H."/>
            <person name="Carbone I."/>
            <person name="Brown D."/>
            <person name="Oh Y.Y."/>
            <person name="Donofrio N."/>
            <person name="Jeong J.S."/>
            <person name="Soanes D.M."/>
            <person name="Djonovic S."/>
            <person name="Kolomiets E."/>
            <person name="Rehmeyer C."/>
            <person name="Li W."/>
            <person name="Harding M."/>
            <person name="Kim S."/>
            <person name="Lebrun M.-H."/>
            <person name="Bohnert H."/>
            <person name="Coughlan S."/>
            <person name="Butler J."/>
            <person name="Calvo S.E."/>
            <person name="Ma L.-J."/>
            <person name="Nicol R."/>
            <person name="Purcell S."/>
            <person name="Nusbaum C."/>
            <person name="Galagan J.E."/>
            <person name="Birren B.W."/>
        </authorList>
    </citation>
    <scope>NUCLEOTIDE SEQUENCE [LARGE SCALE GENOMIC DNA]</scope>
    <source>
        <strain>70-15 / ATCC MYA-4617 / FGSC 8958</strain>
    </source>
</reference>
<organism>
    <name type="scientific">Pyricularia oryzae (strain 70-15 / ATCC MYA-4617 / FGSC 8958)</name>
    <name type="common">Rice blast fungus</name>
    <name type="synonym">Magnaporthe oryzae</name>
    <dbReference type="NCBI Taxonomy" id="242507"/>
    <lineage>
        <taxon>Eukaryota</taxon>
        <taxon>Fungi</taxon>
        <taxon>Dikarya</taxon>
        <taxon>Ascomycota</taxon>
        <taxon>Pezizomycotina</taxon>
        <taxon>Sordariomycetes</taxon>
        <taxon>Sordariomycetidae</taxon>
        <taxon>Magnaporthales</taxon>
        <taxon>Pyriculariaceae</taxon>
        <taxon>Pyricularia</taxon>
    </lineage>
</organism>
<name>IPI1_PYRO7</name>